<name>ENGB_ALLAM</name>
<proteinExistence type="inferred from homology"/>
<protein>
    <recommendedName>
        <fullName evidence="1">Probable GTP-binding protein EngB</fullName>
    </recommendedName>
</protein>
<gene>
    <name evidence="1" type="primary">engB</name>
    <name type="ordered locus">Avi_0456</name>
</gene>
<sequence>MTATKATSDQPLFGRPWIFIRGVPSMKFLPPEGPLEIAFAGRSNVGKSSLINALVGQKGLARTSNTPGRTQELNYFVPEGYSGEGDDLPPMALVDMPGYGYAKAPKDHVDAWTKLVFDYLRGRATLKRVYLLIDSRHGIKANDEDVLTLLDKAAMSYQIVLTKTDKIKEAGVPRLIEETLEKIRKRPAAYPFVLSTSSEKDKGLKELRAAICETVGHFG</sequence>
<comment type="function">
    <text evidence="1">Necessary for normal cell division and for the maintenance of normal septation.</text>
</comment>
<comment type="cofactor">
    <cofactor evidence="1">
        <name>Mg(2+)</name>
        <dbReference type="ChEBI" id="CHEBI:18420"/>
    </cofactor>
</comment>
<comment type="similarity">
    <text evidence="1">Belongs to the TRAFAC class TrmE-Era-EngA-EngB-Septin-like GTPase superfamily. EngB GTPase family.</text>
</comment>
<accession>B9JZK9</accession>
<feature type="chain" id="PRO_1000133040" description="Probable GTP-binding protein EngB">
    <location>
        <begin position="1"/>
        <end position="219"/>
    </location>
</feature>
<feature type="domain" description="EngB-type G" evidence="1">
    <location>
        <begin position="33"/>
        <end position="217"/>
    </location>
</feature>
<feature type="binding site" evidence="1">
    <location>
        <begin position="41"/>
        <end position="48"/>
    </location>
    <ligand>
        <name>GTP</name>
        <dbReference type="ChEBI" id="CHEBI:37565"/>
    </ligand>
</feature>
<feature type="binding site" evidence="1">
    <location>
        <position position="48"/>
    </location>
    <ligand>
        <name>Mg(2+)</name>
        <dbReference type="ChEBI" id="CHEBI:18420"/>
    </ligand>
</feature>
<feature type="binding site" evidence="1">
    <location>
        <begin position="68"/>
        <end position="72"/>
    </location>
    <ligand>
        <name>GTP</name>
        <dbReference type="ChEBI" id="CHEBI:37565"/>
    </ligand>
</feature>
<feature type="binding site" evidence="1">
    <location>
        <position position="70"/>
    </location>
    <ligand>
        <name>Mg(2+)</name>
        <dbReference type="ChEBI" id="CHEBI:18420"/>
    </ligand>
</feature>
<feature type="binding site" evidence="1">
    <location>
        <begin position="95"/>
        <end position="98"/>
    </location>
    <ligand>
        <name>GTP</name>
        <dbReference type="ChEBI" id="CHEBI:37565"/>
    </ligand>
</feature>
<feature type="binding site" evidence="1">
    <location>
        <begin position="162"/>
        <end position="165"/>
    </location>
    <ligand>
        <name>GTP</name>
        <dbReference type="ChEBI" id="CHEBI:37565"/>
    </ligand>
</feature>
<feature type="binding site" evidence="1">
    <location>
        <begin position="196"/>
        <end position="198"/>
    </location>
    <ligand>
        <name>GTP</name>
        <dbReference type="ChEBI" id="CHEBI:37565"/>
    </ligand>
</feature>
<keyword id="KW-0131">Cell cycle</keyword>
<keyword id="KW-0132">Cell division</keyword>
<keyword id="KW-0342">GTP-binding</keyword>
<keyword id="KW-0460">Magnesium</keyword>
<keyword id="KW-0479">Metal-binding</keyword>
<keyword id="KW-0547">Nucleotide-binding</keyword>
<keyword id="KW-1185">Reference proteome</keyword>
<keyword id="KW-0717">Septation</keyword>
<dbReference type="EMBL" id="CP000633">
    <property type="protein sequence ID" value="ACM35321.1"/>
    <property type="molecule type" value="Genomic_DNA"/>
</dbReference>
<dbReference type="SMR" id="B9JZK9"/>
<dbReference type="STRING" id="311402.Avi_0456"/>
<dbReference type="KEGG" id="avi:Avi_0456"/>
<dbReference type="eggNOG" id="COG0218">
    <property type="taxonomic scope" value="Bacteria"/>
</dbReference>
<dbReference type="HOGENOM" id="CLU_033732_2_0_5"/>
<dbReference type="Proteomes" id="UP000001596">
    <property type="component" value="Chromosome 1"/>
</dbReference>
<dbReference type="GO" id="GO:0005829">
    <property type="term" value="C:cytosol"/>
    <property type="evidence" value="ECO:0007669"/>
    <property type="project" value="TreeGrafter"/>
</dbReference>
<dbReference type="GO" id="GO:0005525">
    <property type="term" value="F:GTP binding"/>
    <property type="evidence" value="ECO:0007669"/>
    <property type="project" value="UniProtKB-UniRule"/>
</dbReference>
<dbReference type="GO" id="GO:0046872">
    <property type="term" value="F:metal ion binding"/>
    <property type="evidence" value="ECO:0007669"/>
    <property type="project" value="UniProtKB-KW"/>
</dbReference>
<dbReference type="GO" id="GO:0000917">
    <property type="term" value="P:division septum assembly"/>
    <property type="evidence" value="ECO:0007669"/>
    <property type="project" value="UniProtKB-KW"/>
</dbReference>
<dbReference type="CDD" id="cd01876">
    <property type="entry name" value="YihA_EngB"/>
    <property type="match status" value="1"/>
</dbReference>
<dbReference type="Gene3D" id="3.40.50.300">
    <property type="entry name" value="P-loop containing nucleotide triphosphate hydrolases"/>
    <property type="match status" value="1"/>
</dbReference>
<dbReference type="HAMAP" id="MF_00321">
    <property type="entry name" value="GTPase_EngB"/>
    <property type="match status" value="1"/>
</dbReference>
<dbReference type="InterPro" id="IPR030393">
    <property type="entry name" value="G_ENGB_dom"/>
</dbReference>
<dbReference type="InterPro" id="IPR006073">
    <property type="entry name" value="GTP-bd"/>
</dbReference>
<dbReference type="InterPro" id="IPR019987">
    <property type="entry name" value="GTP-bd_ribosome_bio_YsxC"/>
</dbReference>
<dbReference type="InterPro" id="IPR027417">
    <property type="entry name" value="P-loop_NTPase"/>
</dbReference>
<dbReference type="NCBIfam" id="TIGR03598">
    <property type="entry name" value="GTPase_YsxC"/>
    <property type="match status" value="1"/>
</dbReference>
<dbReference type="PANTHER" id="PTHR11649:SF13">
    <property type="entry name" value="ENGB-TYPE G DOMAIN-CONTAINING PROTEIN"/>
    <property type="match status" value="1"/>
</dbReference>
<dbReference type="PANTHER" id="PTHR11649">
    <property type="entry name" value="MSS1/TRME-RELATED GTP-BINDING PROTEIN"/>
    <property type="match status" value="1"/>
</dbReference>
<dbReference type="Pfam" id="PF01926">
    <property type="entry name" value="MMR_HSR1"/>
    <property type="match status" value="1"/>
</dbReference>
<dbReference type="SUPFAM" id="SSF52540">
    <property type="entry name" value="P-loop containing nucleoside triphosphate hydrolases"/>
    <property type="match status" value="1"/>
</dbReference>
<dbReference type="PROSITE" id="PS51706">
    <property type="entry name" value="G_ENGB"/>
    <property type="match status" value="1"/>
</dbReference>
<organism>
    <name type="scientific">Allorhizobium ampelinum (strain ATCC BAA-846 / DSM 112012 / S4)</name>
    <name type="common">Agrobacterium vitis (strain S4)</name>
    <dbReference type="NCBI Taxonomy" id="311402"/>
    <lineage>
        <taxon>Bacteria</taxon>
        <taxon>Pseudomonadati</taxon>
        <taxon>Pseudomonadota</taxon>
        <taxon>Alphaproteobacteria</taxon>
        <taxon>Hyphomicrobiales</taxon>
        <taxon>Rhizobiaceae</taxon>
        <taxon>Rhizobium/Agrobacterium group</taxon>
        <taxon>Allorhizobium</taxon>
        <taxon>Allorhizobium ampelinum</taxon>
    </lineage>
</organism>
<evidence type="ECO:0000255" key="1">
    <source>
        <dbReference type="HAMAP-Rule" id="MF_00321"/>
    </source>
</evidence>
<reference key="1">
    <citation type="journal article" date="2009" name="J. Bacteriol.">
        <title>Genome sequences of three Agrobacterium biovars help elucidate the evolution of multichromosome genomes in bacteria.</title>
        <authorList>
            <person name="Slater S.C."/>
            <person name="Goldman B.S."/>
            <person name="Goodner B."/>
            <person name="Setubal J.C."/>
            <person name="Farrand S.K."/>
            <person name="Nester E.W."/>
            <person name="Burr T.J."/>
            <person name="Banta L."/>
            <person name="Dickerman A.W."/>
            <person name="Paulsen I."/>
            <person name="Otten L."/>
            <person name="Suen G."/>
            <person name="Welch R."/>
            <person name="Almeida N.F."/>
            <person name="Arnold F."/>
            <person name="Burton O.T."/>
            <person name="Du Z."/>
            <person name="Ewing A."/>
            <person name="Godsy E."/>
            <person name="Heisel S."/>
            <person name="Houmiel K.L."/>
            <person name="Jhaveri J."/>
            <person name="Lu J."/>
            <person name="Miller N.M."/>
            <person name="Norton S."/>
            <person name="Chen Q."/>
            <person name="Phoolcharoen W."/>
            <person name="Ohlin V."/>
            <person name="Ondrusek D."/>
            <person name="Pride N."/>
            <person name="Stricklin S.L."/>
            <person name="Sun J."/>
            <person name="Wheeler C."/>
            <person name="Wilson L."/>
            <person name="Zhu H."/>
            <person name="Wood D.W."/>
        </authorList>
    </citation>
    <scope>NUCLEOTIDE SEQUENCE [LARGE SCALE GENOMIC DNA]</scope>
    <source>
        <strain>ATCC BAA-846 / DSM 112012 / S4</strain>
    </source>
</reference>